<sequence length="29" mass="3195">RICPRILMECKADSDCLAQCICEESGFCG</sequence>
<keyword id="KW-0903">Direct protein sequencing</keyword>
<keyword id="KW-1015">Disulfide bond</keyword>
<keyword id="KW-0960">Knottin</keyword>
<keyword id="KW-0646">Protease inhibitor</keyword>
<keyword id="KW-0964">Secreted</keyword>
<keyword id="KW-0722">Serine protease inhibitor</keyword>
<evidence type="ECO:0000250" key="1">
    <source>
        <dbReference type="UniProtKB" id="P01074"/>
    </source>
</evidence>
<evidence type="ECO:0000255" key="2"/>
<evidence type="ECO:0000269" key="3">
    <source>
    </source>
</evidence>
<evidence type="ECO:0000269" key="4">
    <source>
    </source>
</evidence>
<evidence type="ECO:0000303" key="5">
    <source>
    </source>
</evidence>
<evidence type="ECO:0000303" key="6">
    <source>
    </source>
</evidence>
<evidence type="ECO:0000305" key="7"/>
<reference evidence="7" key="1">
    <citation type="journal article" date="2003" name="Acta Biochim. Pol.">
        <title>Non-conventional affinity chromatography of serine proteinases and their inhibitors.</title>
        <authorList>
            <person name="Polanowski A."/>
            <person name="Wilimowska-Pelc A."/>
            <person name="Kowalska J."/>
            <person name="Grybel J."/>
            <person name="Zelazko M."/>
            <person name="Wilusz T."/>
        </authorList>
    </citation>
    <scope>PROTEIN SEQUENCE</scope>
    <scope>REACTIVE SITE</scope>
    <source>
        <tissue evidence="3">Seed</tissue>
    </source>
</reference>
<reference evidence="7" key="2">
    <citation type="journal article" date="2006" name="Biochim. Biophys. Acta">
        <title>Isolation and primary structures of seven serine proteinase inhibitors from Cyclanthera pedata seeds.</title>
        <authorList>
            <person name="Kowalska J."/>
            <person name="Zablocka A."/>
            <person name="Wilusz T."/>
        </authorList>
    </citation>
    <scope>PROTEIN SEQUENCE</scope>
    <scope>FUNCTION</scope>
    <scope>REACTIVE SITE</scope>
    <source>
        <tissue evidence="4">Seed</tissue>
    </source>
</reference>
<proteinExistence type="evidence at protein level"/>
<protein>
    <recommendedName>
        <fullName evidence="5 6">Trypsin inhibitor 3</fullName>
    </recommendedName>
    <alternativeName>
        <fullName evidence="5 6">CyPTI-III</fullName>
    </alternativeName>
    <alternativeName>
        <fullName evidence="5 6">Trypsin inhibitor III</fullName>
    </alternativeName>
    <component>
        <recommendedName>
            <fullName evidence="5 6">Trypsin inhibitor 1</fullName>
        </recommendedName>
        <alternativeName>
            <fullName evidence="5 6">CyPTI-I</fullName>
        </alternativeName>
        <alternativeName>
            <fullName evidence="5 6">Trypsin inhibitor I</fullName>
        </alternativeName>
    </component>
</protein>
<feature type="peptide" id="PRO_0000033204" description="Trypsin inhibitor 3" evidence="3 4">
    <location>
        <begin position="1"/>
        <end position="29"/>
    </location>
</feature>
<feature type="peptide" id="PRO_0000033205" description="Trypsin inhibitor 1" evidence="3 4">
    <location>
        <begin position="2"/>
        <end position="29"/>
    </location>
</feature>
<feature type="site" description="Reactive bond" evidence="3 4">
    <location>
        <begin position="5"/>
        <end position="6"/>
    </location>
</feature>
<feature type="disulfide bond" evidence="1">
    <location>
        <begin position="3"/>
        <end position="20"/>
    </location>
</feature>
<feature type="disulfide bond" evidence="1">
    <location>
        <begin position="10"/>
        <end position="22"/>
    </location>
</feature>
<feature type="disulfide bond" evidence="1">
    <location>
        <begin position="16"/>
        <end position="28"/>
    </location>
</feature>
<dbReference type="SMR" id="P83394"/>
<dbReference type="GO" id="GO:0005576">
    <property type="term" value="C:extracellular region"/>
    <property type="evidence" value="ECO:0007669"/>
    <property type="project" value="UniProtKB-SubCell"/>
</dbReference>
<dbReference type="GO" id="GO:0004867">
    <property type="term" value="F:serine-type endopeptidase inhibitor activity"/>
    <property type="evidence" value="ECO:0007669"/>
    <property type="project" value="UniProtKB-KW"/>
</dbReference>
<dbReference type="CDD" id="cd00150">
    <property type="entry name" value="PlantTI"/>
    <property type="match status" value="1"/>
</dbReference>
<dbReference type="Gene3D" id="4.10.75.20">
    <property type="match status" value="1"/>
</dbReference>
<dbReference type="InterPro" id="IPR000737">
    <property type="entry name" value="Prot_inh_squash"/>
</dbReference>
<dbReference type="InterPro" id="IPR011052">
    <property type="entry name" value="Proteinase_amylase_inhib_sf"/>
</dbReference>
<dbReference type="Pfam" id="PF00299">
    <property type="entry name" value="Squash"/>
    <property type="match status" value="1"/>
</dbReference>
<dbReference type="PRINTS" id="PR00293">
    <property type="entry name" value="SQUASHINHBTR"/>
</dbReference>
<dbReference type="SMART" id="SM00286">
    <property type="entry name" value="PTI"/>
    <property type="match status" value="1"/>
</dbReference>
<dbReference type="SUPFAM" id="SSF57027">
    <property type="entry name" value="Plant inhibitors of proteinases and amylases"/>
    <property type="match status" value="1"/>
</dbReference>
<dbReference type="PROSITE" id="PS00286">
    <property type="entry name" value="SQUASH_INHIBITOR"/>
    <property type="match status" value="1"/>
</dbReference>
<name>ITR3_CYCPE</name>
<organism>
    <name type="scientific">Cyclanthera pedata</name>
    <name type="common">Achocha</name>
    <name type="synonym">Caihua</name>
    <dbReference type="NCBI Taxonomy" id="198836"/>
    <lineage>
        <taxon>Eukaryota</taxon>
        <taxon>Viridiplantae</taxon>
        <taxon>Streptophyta</taxon>
        <taxon>Embryophyta</taxon>
        <taxon>Tracheophyta</taxon>
        <taxon>Spermatophyta</taxon>
        <taxon>Magnoliopsida</taxon>
        <taxon>eudicotyledons</taxon>
        <taxon>Gunneridae</taxon>
        <taxon>Pentapetalae</taxon>
        <taxon>rosids</taxon>
        <taxon>fabids</taxon>
        <taxon>Cucurbitales</taxon>
        <taxon>Cucurbitaceae</taxon>
        <taxon>Sicyoeae</taxon>
        <taxon>Cyclanthera</taxon>
    </lineage>
</organism>
<accession>P83394</accession>
<accession>P83392</accession>
<comment type="function">
    <text evidence="4">Strongly inhibits trypsin, weakly inhibits chymotrypsin.</text>
</comment>
<comment type="subcellular location">
    <subcellularLocation>
        <location evidence="7">Secreted</location>
    </subcellularLocation>
</comment>
<comment type="domain">
    <text evidence="1">The presence of a 'disulfide through disulfide knot' structurally defines this protein as a knottin.</text>
</comment>
<comment type="similarity">
    <text evidence="2">Belongs to the protease inhibitor I7 (squash-type serine protease inhibitor) family.</text>
</comment>